<feature type="chain" id="PRO_0000196512" description="Trp operon repressor homolog">
    <location>
        <begin position="1"/>
        <end position="103"/>
    </location>
</feature>
<feature type="DNA-binding region" evidence="1">
    <location>
        <begin position="62"/>
        <end position="85"/>
    </location>
</feature>
<name>TRPR_PHOPR</name>
<reference key="1">
    <citation type="journal article" date="2005" name="Science">
        <title>Life at depth: Photobacterium profundum genome sequence and expression analysis.</title>
        <authorList>
            <person name="Vezzi A."/>
            <person name="Campanaro S."/>
            <person name="D'Angelo M."/>
            <person name="Simonato F."/>
            <person name="Vitulo N."/>
            <person name="Lauro F.M."/>
            <person name="Cestaro A."/>
            <person name="Malacrida G."/>
            <person name="Simionati B."/>
            <person name="Cannata N."/>
            <person name="Romualdi C."/>
            <person name="Bartlett D.H."/>
            <person name="Valle G."/>
        </authorList>
    </citation>
    <scope>NUCLEOTIDE SEQUENCE [LARGE SCALE GENOMIC DNA]</scope>
    <source>
        <strain>ATCC BAA-1253 / SS9</strain>
    </source>
</reference>
<gene>
    <name evidence="1" type="primary">trpR</name>
    <name type="ordered locus">PBPRA0642</name>
</gene>
<accession>Q6LUG2</accession>
<keyword id="KW-0963">Cytoplasm</keyword>
<keyword id="KW-0238">DNA-binding</keyword>
<keyword id="KW-1185">Reference proteome</keyword>
<keyword id="KW-0678">Repressor</keyword>
<keyword id="KW-0804">Transcription</keyword>
<keyword id="KW-0805">Transcription regulation</keyword>
<organism>
    <name type="scientific">Photobacterium profundum (strain SS9)</name>
    <dbReference type="NCBI Taxonomy" id="298386"/>
    <lineage>
        <taxon>Bacteria</taxon>
        <taxon>Pseudomonadati</taxon>
        <taxon>Pseudomonadota</taxon>
        <taxon>Gammaproteobacteria</taxon>
        <taxon>Vibrionales</taxon>
        <taxon>Vibrionaceae</taxon>
        <taxon>Photobacterium</taxon>
    </lineage>
</organism>
<dbReference type="EMBL" id="CR378665">
    <property type="protein sequence ID" value="CAG19063.1"/>
    <property type="molecule type" value="Genomic_DNA"/>
</dbReference>
<dbReference type="RefSeq" id="WP_011217411.1">
    <property type="nucleotide sequence ID" value="NC_006370.1"/>
</dbReference>
<dbReference type="SMR" id="Q6LUG2"/>
<dbReference type="STRING" id="298386.PBPRA0642"/>
<dbReference type="KEGG" id="ppr:PBPRA0642"/>
<dbReference type="eggNOG" id="COG2973">
    <property type="taxonomic scope" value="Bacteria"/>
</dbReference>
<dbReference type="HOGENOM" id="CLU_147939_0_0_6"/>
<dbReference type="Proteomes" id="UP000000593">
    <property type="component" value="Chromosome 1"/>
</dbReference>
<dbReference type="GO" id="GO:0005737">
    <property type="term" value="C:cytoplasm"/>
    <property type="evidence" value="ECO:0007669"/>
    <property type="project" value="UniProtKB-SubCell"/>
</dbReference>
<dbReference type="GO" id="GO:0003700">
    <property type="term" value="F:DNA-binding transcription factor activity"/>
    <property type="evidence" value="ECO:0007669"/>
    <property type="project" value="InterPro"/>
</dbReference>
<dbReference type="GO" id="GO:0043565">
    <property type="term" value="F:sequence-specific DNA binding"/>
    <property type="evidence" value="ECO:0007669"/>
    <property type="project" value="InterPro"/>
</dbReference>
<dbReference type="GO" id="GO:0045892">
    <property type="term" value="P:negative regulation of DNA-templated transcription"/>
    <property type="evidence" value="ECO:0007669"/>
    <property type="project" value="UniProtKB-UniRule"/>
</dbReference>
<dbReference type="Gene3D" id="1.10.1270.10">
    <property type="entry name" value="TrpR-like"/>
    <property type="match status" value="1"/>
</dbReference>
<dbReference type="HAMAP" id="MF_00475">
    <property type="entry name" value="Trp_repressor"/>
    <property type="match status" value="1"/>
</dbReference>
<dbReference type="InterPro" id="IPR000831">
    <property type="entry name" value="Trp_repress"/>
</dbReference>
<dbReference type="InterPro" id="IPR013335">
    <property type="entry name" value="Trp_repress_bac"/>
</dbReference>
<dbReference type="InterPro" id="IPR010921">
    <property type="entry name" value="Trp_repressor/repl_initiator"/>
</dbReference>
<dbReference type="InterPro" id="IPR038116">
    <property type="entry name" value="TrpR-like_sf"/>
</dbReference>
<dbReference type="NCBIfam" id="TIGR01321">
    <property type="entry name" value="TrpR"/>
    <property type="match status" value="1"/>
</dbReference>
<dbReference type="PANTHER" id="PTHR38025">
    <property type="entry name" value="TRP OPERON REPRESSOR"/>
    <property type="match status" value="1"/>
</dbReference>
<dbReference type="PANTHER" id="PTHR38025:SF1">
    <property type="entry name" value="TRP OPERON REPRESSOR"/>
    <property type="match status" value="1"/>
</dbReference>
<dbReference type="Pfam" id="PF01371">
    <property type="entry name" value="Trp_repressor"/>
    <property type="match status" value="1"/>
</dbReference>
<dbReference type="PIRSF" id="PIRSF003196">
    <property type="entry name" value="Trp_repressor"/>
    <property type="match status" value="1"/>
</dbReference>
<dbReference type="SUPFAM" id="SSF48295">
    <property type="entry name" value="TrpR-like"/>
    <property type="match status" value="1"/>
</dbReference>
<protein>
    <recommendedName>
        <fullName evidence="1">Trp operon repressor homolog</fullName>
    </recommendedName>
</protein>
<comment type="function">
    <text evidence="1">This protein is an aporepressor. When complexed with L-tryptophan it binds the operator region of the trp operon and prevents the initiation of transcription.</text>
</comment>
<comment type="subunit">
    <text evidence="1">Homodimer.</text>
</comment>
<comment type="subcellular location">
    <subcellularLocation>
        <location evidence="1">Cytoplasm</location>
    </subcellularLocation>
</comment>
<comment type="similarity">
    <text evidence="1">Belongs to the TrpR family.</text>
</comment>
<proteinExistence type="inferred from homology"/>
<sequence>MSTTPETADFTEWQQVVDLLRQAALEQKDDVMLKLLLTPDEREALLARVNILHELMNGQRSQRKISELLGVGVATITRGSNELKHQSDDTKEWLASLLKKQQQ</sequence>
<evidence type="ECO:0000255" key="1">
    <source>
        <dbReference type="HAMAP-Rule" id="MF_00475"/>
    </source>
</evidence>